<reference key="1">
    <citation type="journal article" date="2005" name="Proc. Natl. Acad. Sci. U.S.A.">
        <title>Whole genome sequence of Staphylococcus saprophyticus reveals the pathogenesis of uncomplicated urinary tract infection.</title>
        <authorList>
            <person name="Kuroda M."/>
            <person name="Yamashita A."/>
            <person name="Hirakawa H."/>
            <person name="Kumano M."/>
            <person name="Morikawa K."/>
            <person name="Higashide M."/>
            <person name="Maruyama A."/>
            <person name="Inose Y."/>
            <person name="Matoba K."/>
            <person name="Toh H."/>
            <person name="Kuhara S."/>
            <person name="Hattori M."/>
            <person name="Ohta T."/>
        </authorList>
    </citation>
    <scope>NUCLEOTIDE SEQUENCE [LARGE SCALE GENOMIC DNA]</scope>
    <source>
        <strain>ATCC 15305 / DSM 20229 / NCIMB 8711 / NCTC 7292 / S-41</strain>
    </source>
</reference>
<accession>Q49UX2</accession>
<dbReference type="EC" id="4.2.1.9" evidence="1"/>
<dbReference type="EMBL" id="AP008934">
    <property type="protein sequence ID" value="BAE19438.1"/>
    <property type="molecule type" value="Genomic_DNA"/>
</dbReference>
<dbReference type="SMR" id="Q49UX2"/>
<dbReference type="GeneID" id="3615681"/>
<dbReference type="KEGG" id="ssp:SSP2293"/>
<dbReference type="PATRIC" id="fig|342451.11.peg.2284"/>
<dbReference type="eggNOG" id="COG0129">
    <property type="taxonomic scope" value="Bacteria"/>
</dbReference>
<dbReference type="HOGENOM" id="CLU_014271_4_2_9"/>
<dbReference type="OrthoDB" id="9807077at2"/>
<dbReference type="UniPathway" id="UPA00047">
    <property type="reaction ID" value="UER00057"/>
</dbReference>
<dbReference type="UniPathway" id="UPA00049">
    <property type="reaction ID" value="UER00061"/>
</dbReference>
<dbReference type="Proteomes" id="UP000006371">
    <property type="component" value="Chromosome"/>
</dbReference>
<dbReference type="GO" id="GO:0051537">
    <property type="term" value="F:2 iron, 2 sulfur cluster binding"/>
    <property type="evidence" value="ECO:0007669"/>
    <property type="project" value="UniProtKB-UniRule"/>
</dbReference>
<dbReference type="GO" id="GO:0004160">
    <property type="term" value="F:dihydroxy-acid dehydratase activity"/>
    <property type="evidence" value="ECO:0007669"/>
    <property type="project" value="UniProtKB-UniRule"/>
</dbReference>
<dbReference type="GO" id="GO:0000287">
    <property type="term" value="F:magnesium ion binding"/>
    <property type="evidence" value="ECO:0007669"/>
    <property type="project" value="UniProtKB-UniRule"/>
</dbReference>
<dbReference type="GO" id="GO:0009097">
    <property type="term" value="P:isoleucine biosynthetic process"/>
    <property type="evidence" value="ECO:0007669"/>
    <property type="project" value="UniProtKB-UniRule"/>
</dbReference>
<dbReference type="GO" id="GO:0009099">
    <property type="term" value="P:L-valine biosynthetic process"/>
    <property type="evidence" value="ECO:0007669"/>
    <property type="project" value="UniProtKB-UniRule"/>
</dbReference>
<dbReference type="FunFam" id="3.50.30.80:FF:000001">
    <property type="entry name" value="Dihydroxy-acid dehydratase"/>
    <property type="match status" value="1"/>
</dbReference>
<dbReference type="Gene3D" id="3.50.30.80">
    <property type="entry name" value="IlvD/EDD C-terminal domain-like"/>
    <property type="match status" value="1"/>
</dbReference>
<dbReference type="HAMAP" id="MF_00012">
    <property type="entry name" value="IlvD"/>
    <property type="match status" value="1"/>
</dbReference>
<dbReference type="InterPro" id="IPR050165">
    <property type="entry name" value="DHAD_IlvD/Edd"/>
</dbReference>
<dbReference type="InterPro" id="IPR042096">
    <property type="entry name" value="Dihydro-acid_dehy_C"/>
</dbReference>
<dbReference type="InterPro" id="IPR004404">
    <property type="entry name" value="DihydroxyA_deHydtase"/>
</dbReference>
<dbReference type="InterPro" id="IPR020558">
    <property type="entry name" value="DiOHA_6PGluconate_deHydtase_CS"/>
</dbReference>
<dbReference type="InterPro" id="IPR056740">
    <property type="entry name" value="ILV_EDD_C"/>
</dbReference>
<dbReference type="InterPro" id="IPR000581">
    <property type="entry name" value="ILV_EDD_N"/>
</dbReference>
<dbReference type="InterPro" id="IPR037237">
    <property type="entry name" value="IlvD/EDD_N"/>
</dbReference>
<dbReference type="NCBIfam" id="TIGR00110">
    <property type="entry name" value="ilvD"/>
    <property type="match status" value="1"/>
</dbReference>
<dbReference type="NCBIfam" id="NF002068">
    <property type="entry name" value="PRK00911.1"/>
    <property type="match status" value="1"/>
</dbReference>
<dbReference type="PANTHER" id="PTHR21000">
    <property type="entry name" value="DIHYDROXY-ACID DEHYDRATASE DAD"/>
    <property type="match status" value="1"/>
</dbReference>
<dbReference type="PANTHER" id="PTHR21000:SF5">
    <property type="entry name" value="DIHYDROXY-ACID DEHYDRATASE, MITOCHONDRIAL"/>
    <property type="match status" value="1"/>
</dbReference>
<dbReference type="Pfam" id="PF24877">
    <property type="entry name" value="ILV_EDD_C"/>
    <property type="match status" value="1"/>
</dbReference>
<dbReference type="Pfam" id="PF00920">
    <property type="entry name" value="ILVD_EDD_N"/>
    <property type="match status" value="1"/>
</dbReference>
<dbReference type="SUPFAM" id="SSF143975">
    <property type="entry name" value="IlvD/EDD N-terminal domain-like"/>
    <property type="match status" value="1"/>
</dbReference>
<dbReference type="SUPFAM" id="SSF52016">
    <property type="entry name" value="LeuD/IlvD-like"/>
    <property type="match status" value="1"/>
</dbReference>
<dbReference type="PROSITE" id="PS00886">
    <property type="entry name" value="ILVD_EDD_1"/>
    <property type="match status" value="1"/>
</dbReference>
<dbReference type="PROSITE" id="PS00887">
    <property type="entry name" value="ILVD_EDD_2"/>
    <property type="match status" value="1"/>
</dbReference>
<name>ILVD2_STAS1</name>
<sequence>MTKEHSEQQKDLRIRSKVISEGVSRTPNRAYLRALGFEDEDFQKPMIGVASTWSEVTPCNMHIDGLARASKQGISEAGASPLIFNTITVSDGISMGTDGMRFSLPSREIIADSIESVVSAENLDALVAIGGCDKNMPGCMIGIARLNLPAVFVYGGTILPGKLDGKDLDAVSAFEGVGQYNNGEIDKEALHKVECAACPGAGACGGMFTANTMSSAIEAMGMSLPGSASHPAVSTNKSKDSRAAGKAVYKLLEKGIYPKDIMTKEAFENAITVVMALGGSTNAILHLLAIAHTIEVDLTLDDFEKIRKRVPHIADLRPSGKYVMAHLDEVGGIPAVMKLLHDKGLIHGDCLTVTGKTVAENLEQQPDLTDNKSIIDFDNPKHATGPLVILKGNLAPEGAVAKISGLSVTYIKGPARVFDSESKATKAILNDEIKPGDVVVIRYAGPKGAPGMPEMLSASSILVGKGLGESVALLTDGRFSGGSHGLVIGHAAPESQVGGPMALLEENDTITIDAEKLEISFDVSDEELERRNKQWQAPPLKANRGTLAKYAKLVSSASKGAITD</sequence>
<keyword id="KW-0001">2Fe-2S</keyword>
<keyword id="KW-0028">Amino-acid biosynthesis</keyword>
<keyword id="KW-0100">Branched-chain amino acid biosynthesis</keyword>
<keyword id="KW-0408">Iron</keyword>
<keyword id="KW-0411">Iron-sulfur</keyword>
<keyword id="KW-0456">Lyase</keyword>
<keyword id="KW-0460">Magnesium</keyword>
<keyword id="KW-0479">Metal-binding</keyword>
<keyword id="KW-1185">Reference proteome</keyword>
<protein>
    <recommendedName>
        <fullName evidence="1">Dihydroxy-acid dehydratase 2</fullName>
        <shortName evidence="1">DAD 2</shortName>
        <ecNumber evidence="1">4.2.1.9</ecNumber>
    </recommendedName>
</protein>
<comment type="function">
    <text evidence="1">Functions in the biosynthesis of branched-chain amino acids. Catalyzes the dehydration of (2R,3R)-2,3-dihydroxy-3-methylpentanoate (2,3-dihydroxy-3-methylvalerate) into 2-oxo-3-methylpentanoate (2-oxo-3-methylvalerate) and of (2R)-2,3-dihydroxy-3-methylbutanoate (2,3-dihydroxyisovalerate) into 2-oxo-3-methylbutanoate (2-oxoisovalerate), the penultimate precursor to L-isoleucine and L-valine, respectively.</text>
</comment>
<comment type="catalytic activity">
    <reaction evidence="1">
        <text>(2R)-2,3-dihydroxy-3-methylbutanoate = 3-methyl-2-oxobutanoate + H2O</text>
        <dbReference type="Rhea" id="RHEA:24809"/>
        <dbReference type="ChEBI" id="CHEBI:11851"/>
        <dbReference type="ChEBI" id="CHEBI:15377"/>
        <dbReference type="ChEBI" id="CHEBI:49072"/>
        <dbReference type="EC" id="4.2.1.9"/>
    </reaction>
    <physiologicalReaction direction="left-to-right" evidence="1">
        <dbReference type="Rhea" id="RHEA:24810"/>
    </physiologicalReaction>
</comment>
<comment type="catalytic activity">
    <reaction evidence="1">
        <text>(2R,3R)-2,3-dihydroxy-3-methylpentanoate = (S)-3-methyl-2-oxopentanoate + H2O</text>
        <dbReference type="Rhea" id="RHEA:27694"/>
        <dbReference type="ChEBI" id="CHEBI:15377"/>
        <dbReference type="ChEBI" id="CHEBI:35146"/>
        <dbReference type="ChEBI" id="CHEBI:49258"/>
        <dbReference type="EC" id="4.2.1.9"/>
    </reaction>
    <physiologicalReaction direction="left-to-right" evidence="1">
        <dbReference type="Rhea" id="RHEA:27695"/>
    </physiologicalReaction>
</comment>
<comment type="cofactor">
    <cofactor evidence="1">
        <name>[2Fe-2S] cluster</name>
        <dbReference type="ChEBI" id="CHEBI:190135"/>
    </cofactor>
    <text evidence="1">Binds 1 [2Fe-2S] cluster per subunit. This cluster acts as a Lewis acid cofactor.</text>
</comment>
<comment type="cofactor">
    <cofactor evidence="1">
        <name>Mg(2+)</name>
        <dbReference type="ChEBI" id="CHEBI:18420"/>
    </cofactor>
</comment>
<comment type="pathway">
    <text evidence="1">Amino-acid biosynthesis; L-isoleucine biosynthesis; L-isoleucine from 2-oxobutanoate: step 3/4.</text>
</comment>
<comment type="pathway">
    <text evidence="1">Amino-acid biosynthesis; L-valine biosynthesis; L-valine from pyruvate: step 3/4.</text>
</comment>
<comment type="subunit">
    <text evidence="1">Homodimer.</text>
</comment>
<comment type="similarity">
    <text evidence="1">Belongs to the IlvD/Edd family.</text>
</comment>
<gene>
    <name evidence="1" type="primary">ilvD2</name>
    <name type="ordered locus">SSP2293</name>
</gene>
<feature type="chain" id="PRO_0000225427" description="Dihydroxy-acid dehydratase 2">
    <location>
        <begin position="1"/>
        <end position="564"/>
    </location>
</feature>
<feature type="active site" description="Proton acceptor" evidence="1">
    <location>
        <position position="480"/>
    </location>
</feature>
<feature type="binding site" evidence="1">
    <location>
        <position position="59"/>
    </location>
    <ligand>
        <name>[2Fe-2S] cluster</name>
        <dbReference type="ChEBI" id="CHEBI:190135"/>
    </ligand>
</feature>
<feature type="binding site" evidence="1">
    <location>
        <position position="91"/>
    </location>
    <ligand>
        <name>Mg(2+)</name>
        <dbReference type="ChEBI" id="CHEBI:18420"/>
    </ligand>
</feature>
<feature type="binding site" evidence="1">
    <location>
        <position position="132"/>
    </location>
    <ligand>
        <name>[2Fe-2S] cluster</name>
        <dbReference type="ChEBI" id="CHEBI:190135"/>
    </ligand>
</feature>
<feature type="binding site" evidence="1">
    <location>
        <position position="133"/>
    </location>
    <ligand>
        <name>Mg(2+)</name>
        <dbReference type="ChEBI" id="CHEBI:18420"/>
    </ligand>
</feature>
<feature type="binding site" description="via carbamate group" evidence="1">
    <location>
        <position position="134"/>
    </location>
    <ligand>
        <name>Mg(2+)</name>
        <dbReference type="ChEBI" id="CHEBI:18420"/>
    </ligand>
</feature>
<feature type="binding site" evidence="1">
    <location>
        <position position="204"/>
    </location>
    <ligand>
        <name>[2Fe-2S] cluster</name>
        <dbReference type="ChEBI" id="CHEBI:190135"/>
    </ligand>
</feature>
<feature type="binding site" evidence="1">
    <location>
        <position position="454"/>
    </location>
    <ligand>
        <name>Mg(2+)</name>
        <dbReference type="ChEBI" id="CHEBI:18420"/>
    </ligand>
</feature>
<feature type="modified residue" description="N6-carboxylysine" evidence="1">
    <location>
        <position position="134"/>
    </location>
</feature>
<organism>
    <name type="scientific">Staphylococcus saprophyticus subsp. saprophyticus (strain ATCC 15305 / DSM 20229 / NCIMB 8711 / NCTC 7292 / S-41)</name>
    <dbReference type="NCBI Taxonomy" id="342451"/>
    <lineage>
        <taxon>Bacteria</taxon>
        <taxon>Bacillati</taxon>
        <taxon>Bacillota</taxon>
        <taxon>Bacilli</taxon>
        <taxon>Bacillales</taxon>
        <taxon>Staphylococcaceae</taxon>
        <taxon>Staphylococcus</taxon>
    </lineage>
</organism>
<evidence type="ECO:0000255" key="1">
    <source>
        <dbReference type="HAMAP-Rule" id="MF_00012"/>
    </source>
</evidence>
<proteinExistence type="inferred from homology"/>